<evidence type="ECO:0000250" key="1"/>
<evidence type="ECO:0000255" key="2"/>
<evidence type="ECO:0000305" key="3"/>
<comment type="function">
    <text evidence="1">Nonessential protein required for the fusion of ER-derived transport vesicles with the Golgi complex. Can be replaced by sft2 (By similarity).</text>
</comment>
<comment type="subcellular location">
    <subcellularLocation>
        <location evidence="1">Golgi apparatus membrane</location>
        <topology evidence="1">Multi-pass membrane protein</topology>
    </subcellularLocation>
</comment>
<comment type="similarity">
    <text evidence="3">Belongs to the GOT1 family.</text>
</comment>
<feature type="chain" id="PRO_0000218585" description="Protein transport protein got1">
    <location>
        <begin position="1"/>
        <end position="129"/>
    </location>
</feature>
<feature type="topological domain" description="Cytoplasmic" evidence="2">
    <location>
        <begin position="1"/>
        <end position="8"/>
    </location>
</feature>
<feature type="transmembrane region" description="Helical; Name=1" evidence="2">
    <location>
        <begin position="9"/>
        <end position="29"/>
    </location>
</feature>
<feature type="topological domain" description="Lumenal" evidence="2">
    <location>
        <position position="30"/>
    </location>
</feature>
<feature type="transmembrane region" description="Helical; Name=2" evidence="2">
    <location>
        <begin position="31"/>
        <end position="51"/>
    </location>
</feature>
<feature type="topological domain" description="Cytoplasmic" evidence="2">
    <location>
        <begin position="52"/>
        <end position="67"/>
    </location>
</feature>
<feature type="transmembrane region" description="Helical; Name=3" evidence="2">
    <location>
        <begin position="68"/>
        <end position="88"/>
    </location>
</feature>
<feature type="topological domain" description="Lumenal" evidence="2">
    <location>
        <begin position="89"/>
        <end position="90"/>
    </location>
</feature>
<feature type="transmembrane region" description="Helical; Name=4" evidence="2">
    <location>
        <begin position="91"/>
        <end position="111"/>
    </location>
</feature>
<feature type="topological domain" description="Cytoplasmic" evidence="2">
    <location>
        <begin position="112"/>
        <end position="129"/>
    </location>
</feature>
<keyword id="KW-0333">Golgi apparatus</keyword>
<keyword id="KW-0472">Membrane</keyword>
<keyword id="KW-0653">Protein transport</keyword>
<keyword id="KW-1185">Reference proteome</keyword>
<keyword id="KW-0812">Transmembrane</keyword>
<keyword id="KW-1133">Transmembrane helix</keyword>
<keyword id="KW-0813">Transport</keyword>
<gene>
    <name type="primary">got1</name>
    <name type="ORF">SPCC4B3.02c</name>
</gene>
<reference key="1">
    <citation type="journal article" date="2002" name="Nature">
        <title>The genome sequence of Schizosaccharomyces pombe.</title>
        <authorList>
            <person name="Wood V."/>
            <person name="Gwilliam R."/>
            <person name="Rajandream M.A."/>
            <person name="Lyne M.H."/>
            <person name="Lyne R."/>
            <person name="Stewart A."/>
            <person name="Sgouros J.G."/>
            <person name="Peat N."/>
            <person name="Hayles J."/>
            <person name="Baker S.G."/>
            <person name="Basham D."/>
            <person name="Bowman S."/>
            <person name="Brooks K."/>
            <person name="Brown D."/>
            <person name="Brown S."/>
            <person name="Chillingworth T."/>
            <person name="Churcher C.M."/>
            <person name="Collins M."/>
            <person name="Connor R."/>
            <person name="Cronin A."/>
            <person name="Davis P."/>
            <person name="Feltwell T."/>
            <person name="Fraser A."/>
            <person name="Gentles S."/>
            <person name="Goble A."/>
            <person name="Hamlin N."/>
            <person name="Harris D.E."/>
            <person name="Hidalgo J."/>
            <person name="Hodgson G."/>
            <person name="Holroyd S."/>
            <person name="Hornsby T."/>
            <person name="Howarth S."/>
            <person name="Huckle E.J."/>
            <person name="Hunt S."/>
            <person name="Jagels K."/>
            <person name="James K.D."/>
            <person name="Jones L."/>
            <person name="Jones M."/>
            <person name="Leather S."/>
            <person name="McDonald S."/>
            <person name="McLean J."/>
            <person name="Mooney P."/>
            <person name="Moule S."/>
            <person name="Mungall K.L."/>
            <person name="Murphy L.D."/>
            <person name="Niblett D."/>
            <person name="Odell C."/>
            <person name="Oliver K."/>
            <person name="O'Neil S."/>
            <person name="Pearson D."/>
            <person name="Quail M.A."/>
            <person name="Rabbinowitsch E."/>
            <person name="Rutherford K.M."/>
            <person name="Rutter S."/>
            <person name="Saunders D."/>
            <person name="Seeger K."/>
            <person name="Sharp S."/>
            <person name="Skelton J."/>
            <person name="Simmonds M.N."/>
            <person name="Squares R."/>
            <person name="Squares S."/>
            <person name="Stevens K."/>
            <person name="Taylor K."/>
            <person name="Taylor R.G."/>
            <person name="Tivey A."/>
            <person name="Walsh S.V."/>
            <person name="Warren T."/>
            <person name="Whitehead S."/>
            <person name="Woodward J.R."/>
            <person name="Volckaert G."/>
            <person name="Aert R."/>
            <person name="Robben J."/>
            <person name="Grymonprez B."/>
            <person name="Weltjens I."/>
            <person name="Vanstreels E."/>
            <person name="Rieger M."/>
            <person name="Schaefer M."/>
            <person name="Mueller-Auer S."/>
            <person name="Gabel C."/>
            <person name="Fuchs M."/>
            <person name="Duesterhoeft A."/>
            <person name="Fritzc C."/>
            <person name="Holzer E."/>
            <person name="Moestl D."/>
            <person name="Hilbert H."/>
            <person name="Borzym K."/>
            <person name="Langer I."/>
            <person name="Beck A."/>
            <person name="Lehrach H."/>
            <person name="Reinhardt R."/>
            <person name="Pohl T.M."/>
            <person name="Eger P."/>
            <person name="Zimmermann W."/>
            <person name="Wedler H."/>
            <person name="Wambutt R."/>
            <person name="Purnelle B."/>
            <person name="Goffeau A."/>
            <person name="Cadieu E."/>
            <person name="Dreano S."/>
            <person name="Gloux S."/>
            <person name="Lelaure V."/>
            <person name="Mottier S."/>
            <person name="Galibert F."/>
            <person name="Aves S.J."/>
            <person name="Xiang Z."/>
            <person name="Hunt C."/>
            <person name="Moore K."/>
            <person name="Hurst S.M."/>
            <person name="Lucas M."/>
            <person name="Rochet M."/>
            <person name="Gaillardin C."/>
            <person name="Tallada V.A."/>
            <person name="Garzon A."/>
            <person name="Thode G."/>
            <person name="Daga R.R."/>
            <person name="Cruzado L."/>
            <person name="Jimenez J."/>
            <person name="Sanchez M."/>
            <person name="del Rey F."/>
            <person name="Benito J."/>
            <person name="Dominguez A."/>
            <person name="Revuelta J.L."/>
            <person name="Moreno S."/>
            <person name="Armstrong J."/>
            <person name="Forsburg S.L."/>
            <person name="Cerutti L."/>
            <person name="Lowe T."/>
            <person name="McCombie W.R."/>
            <person name="Paulsen I."/>
            <person name="Potashkin J."/>
            <person name="Shpakovski G.V."/>
            <person name="Ussery D."/>
            <person name="Barrell B.G."/>
            <person name="Nurse P."/>
        </authorList>
    </citation>
    <scope>NUCLEOTIDE SEQUENCE [LARGE SCALE GENOMIC DNA]</scope>
    <source>
        <strain>972 / ATCC 24843</strain>
    </source>
</reference>
<protein>
    <recommendedName>
        <fullName>Protein transport protein got1</fullName>
    </recommendedName>
    <alternativeName>
        <fullName>Golgi transport protein 1</fullName>
    </alternativeName>
</protein>
<accession>Q9USJ2</accession>
<name>GOT1_SCHPO</name>
<proteinExistence type="inferred from homology"/>
<sequence length="129" mass="14707">MWLSDLQKIGVGTTALGFLFMIMGIFMFFDGPLLSLGNLLLVFGFFMIAGFSKSVSFFLRKDRMLGSISFFSGLLLTLFHFPIIGFFVECLGFFNLFKVFYPLIISFLRTVPYIGPYIDRLTSYQQSPV</sequence>
<dbReference type="EMBL" id="CU329672">
    <property type="protein sequence ID" value="CAB60676.1"/>
    <property type="molecule type" value="Genomic_DNA"/>
</dbReference>
<dbReference type="PIR" id="T50446">
    <property type="entry name" value="T50446"/>
</dbReference>
<dbReference type="RefSeq" id="NP_588088.1">
    <property type="nucleotide sequence ID" value="NM_001023080.2"/>
</dbReference>
<dbReference type="BioGRID" id="275455">
    <property type="interactions" value="16"/>
</dbReference>
<dbReference type="FunCoup" id="Q9USJ2">
    <property type="interactions" value="457"/>
</dbReference>
<dbReference type="STRING" id="284812.Q9USJ2"/>
<dbReference type="PaxDb" id="4896-SPCC4B3.02c.1"/>
<dbReference type="EnsemblFungi" id="SPCC4B3.02c.1">
    <property type="protein sequence ID" value="SPCC4B3.02c.1:pep"/>
    <property type="gene ID" value="SPCC4B3.02c"/>
</dbReference>
<dbReference type="GeneID" id="2538876"/>
<dbReference type="KEGG" id="spo:2538876"/>
<dbReference type="PomBase" id="SPCC4B3.02c">
    <property type="gene designation" value="got1"/>
</dbReference>
<dbReference type="VEuPathDB" id="FungiDB:SPCC4B3.02c"/>
<dbReference type="eggNOG" id="KOG1743">
    <property type="taxonomic scope" value="Eukaryota"/>
</dbReference>
<dbReference type="HOGENOM" id="CLU_124519_1_0_1"/>
<dbReference type="InParanoid" id="Q9USJ2"/>
<dbReference type="OMA" id="MWLTDAQ"/>
<dbReference type="PhylomeDB" id="Q9USJ2"/>
<dbReference type="PRO" id="PR:Q9USJ2"/>
<dbReference type="Proteomes" id="UP000002485">
    <property type="component" value="Chromosome III"/>
</dbReference>
<dbReference type="GO" id="GO:0030134">
    <property type="term" value="C:COPII-coated ER to Golgi transport vesicle"/>
    <property type="evidence" value="ECO:0000318"/>
    <property type="project" value="GO_Central"/>
</dbReference>
<dbReference type="GO" id="GO:0005829">
    <property type="term" value="C:cytosol"/>
    <property type="evidence" value="ECO:0007669"/>
    <property type="project" value="GOC"/>
</dbReference>
<dbReference type="GO" id="GO:0005783">
    <property type="term" value="C:endoplasmic reticulum"/>
    <property type="evidence" value="ECO:0007005"/>
    <property type="project" value="PomBase"/>
</dbReference>
<dbReference type="GO" id="GO:0000137">
    <property type="term" value="C:Golgi cis cisterna"/>
    <property type="evidence" value="ECO:0000318"/>
    <property type="project" value="GO_Central"/>
</dbReference>
<dbReference type="GO" id="GO:0000139">
    <property type="term" value="C:Golgi membrane"/>
    <property type="evidence" value="ECO:0000318"/>
    <property type="project" value="GO_Central"/>
</dbReference>
<dbReference type="GO" id="GO:0006888">
    <property type="term" value="P:endoplasmic reticulum to Golgi vesicle-mediated transport"/>
    <property type="evidence" value="ECO:0000250"/>
    <property type="project" value="PomBase"/>
</dbReference>
<dbReference type="GO" id="GO:0006895">
    <property type="term" value="P:Golgi to endosome transport"/>
    <property type="evidence" value="ECO:0000250"/>
    <property type="project" value="PomBase"/>
</dbReference>
<dbReference type="GO" id="GO:0006886">
    <property type="term" value="P:intracellular protein transport"/>
    <property type="evidence" value="ECO:0000250"/>
    <property type="project" value="PomBase"/>
</dbReference>
<dbReference type="GO" id="GO:0042147">
    <property type="term" value="P:retrograde transport, endosome to Golgi"/>
    <property type="evidence" value="ECO:0007669"/>
    <property type="project" value="InterPro"/>
</dbReference>
<dbReference type="InterPro" id="IPR045176">
    <property type="entry name" value="Got1"/>
</dbReference>
<dbReference type="InterPro" id="IPR007305">
    <property type="entry name" value="Vesicle_transpt_Got1/SFT2"/>
</dbReference>
<dbReference type="PANTHER" id="PTHR21493">
    <property type="entry name" value="CGI-141-RELATED/LIPASE CONTAINING PROTEIN"/>
    <property type="match status" value="1"/>
</dbReference>
<dbReference type="PANTHER" id="PTHR21493:SF9">
    <property type="entry name" value="GOLGI TRANSPORT PROTEIN 1-RELATED"/>
    <property type="match status" value="1"/>
</dbReference>
<dbReference type="Pfam" id="PF04178">
    <property type="entry name" value="Got1"/>
    <property type="match status" value="1"/>
</dbReference>
<organism>
    <name type="scientific">Schizosaccharomyces pombe (strain 972 / ATCC 24843)</name>
    <name type="common">Fission yeast</name>
    <dbReference type="NCBI Taxonomy" id="284812"/>
    <lineage>
        <taxon>Eukaryota</taxon>
        <taxon>Fungi</taxon>
        <taxon>Dikarya</taxon>
        <taxon>Ascomycota</taxon>
        <taxon>Taphrinomycotina</taxon>
        <taxon>Schizosaccharomycetes</taxon>
        <taxon>Schizosaccharomycetales</taxon>
        <taxon>Schizosaccharomycetaceae</taxon>
        <taxon>Schizosaccharomyces</taxon>
    </lineage>
</organism>